<dbReference type="EMBL" id="BC097375">
    <property type="protein sequence ID" value="AAH97375.1"/>
    <property type="molecule type" value="mRNA"/>
</dbReference>
<dbReference type="RefSeq" id="NP_001020842.1">
    <property type="nucleotide sequence ID" value="NM_001025671.2"/>
</dbReference>
<dbReference type="RefSeq" id="NP_001415907.1">
    <property type="nucleotide sequence ID" value="NM_001428978.1"/>
</dbReference>
<dbReference type="RefSeq" id="NP_001415908.1">
    <property type="nucleotide sequence ID" value="NM_001428979.1"/>
</dbReference>
<dbReference type="RefSeq" id="XP_006250807.1">
    <property type="nucleotide sequence ID" value="XM_006250745.3"/>
</dbReference>
<dbReference type="RefSeq" id="XP_006250809.1">
    <property type="nucleotide sequence ID" value="XM_006250747.3"/>
</dbReference>
<dbReference type="RefSeq" id="XP_006250810.1">
    <property type="nucleotide sequence ID" value="XM_006250748.1"/>
</dbReference>
<dbReference type="RefSeq" id="XP_008768259.1">
    <property type="nucleotide sequence ID" value="XM_008770037.2"/>
</dbReference>
<dbReference type="RefSeq" id="XP_008768260.1">
    <property type="nucleotide sequence ID" value="XM_008770038.2"/>
</dbReference>
<dbReference type="SMR" id="Q4QR82"/>
<dbReference type="BioGRID" id="258112">
    <property type="interactions" value="1"/>
</dbReference>
<dbReference type="FunCoup" id="Q4QR82">
    <property type="interactions" value="1174"/>
</dbReference>
<dbReference type="STRING" id="10116.ENSRNOP00000003836"/>
<dbReference type="PhosphoSitePlus" id="Q4QR82"/>
<dbReference type="PaxDb" id="10116-ENSRNOP00000003836"/>
<dbReference type="Ensembl" id="ENSRNOT00000003836.7">
    <property type="protein sequence ID" value="ENSRNOP00000003836.5"/>
    <property type="gene ID" value="ENSRNOG00000002866.7"/>
</dbReference>
<dbReference type="GeneID" id="305251"/>
<dbReference type="KEGG" id="rno:305251"/>
<dbReference type="UCSC" id="RGD:1566082">
    <property type="organism name" value="rat"/>
</dbReference>
<dbReference type="AGR" id="RGD:1566082"/>
<dbReference type="CTD" id="166824"/>
<dbReference type="RGD" id="1566082">
    <property type="gene designation" value="Rassf6"/>
</dbReference>
<dbReference type="eggNOG" id="KOG4239">
    <property type="taxonomic scope" value="Eukaryota"/>
</dbReference>
<dbReference type="GeneTree" id="ENSGT00940000159886"/>
<dbReference type="HOGENOM" id="CLU_018893_0_0_1"/>
<dbReference type="InParanoid" id="Q4QR82"/>
<dbReference type="OMA" id="WIFVNER"/>
<dbReference type="OrthoDB" id="9976881at2759"/>
<dbReference type="PhylomeDB" id="Q4QR82"/>
<dbReference type="TreeFam" id="TF319243"/>
<dbReference type="PRO" id="PR:Q4QR82"/>
<dbReference type="Proteomes" id="UP000002494">
    <property type="component" value="Chromosome 14"/>
</dbReference>
<dbReference type="Bgee" id="ENSRNOG00000002866">
    <property type="expression patterns" value="Expressed in colon and 13 other cell types or tissues"/>
</dbReference>
<dbReference type="GO" id="GO:0006915">
    <property type="term" value="P:apoptotic process"/>
    <property type="evidence" value="ECO:0007669"/>
    <property type="project" value="UniProtKB-KW"/>
</dbReference>
<dbReference type="GO" id="GO:0043065">
    <property type="term" value="P:positive regulation of apoptotic process"/>
    <property type="evidence" value="ECO:0000266"/>
    <property type="project" value="RGD"/>
</dbReference>
<dbReference type="GO" id="GO:0042981">
    <property type="term" value="P:regulation of apoptotic process"/>
    <property type="evidence" value="ECO:0000266"/>
    <property type="project" value="RGD"/>
</dbReference>
<dbReference type="GO" id="GO:0007165">
    <property type="term" value="P:signal transduction"/>
    <property type="evidence" value="ECO:0000318"/>
    <property type="project" value="GO_Central"/>
</dbReference>
<dbReference type="CDD" id="cd21895">
    <property type="entry name" value="SARAH_RASSF6"/>
    <property type="match status" value="1"/>
</dbReference>
<dbReference type="Gene3D" id="3.10.20.90">
    <property type="entry name" value="Phosphatidylinositol 3-kinase Catalytic Subunit, Chain A, domain 1"/>
    <property type="match status" value="1"/>
</dbReference>
<dbReference type="InterPro" id="IPR000159">
    <property type="entry name" value="RA_dom"/>
</dbReference>
<dbReference type="InterPro" id="IPR033614">
    <property type="entry name" value="RASSF1-6"/>
</dbReference>
<dbReference type="InterPro" id="IPR011524">
    <property type="entry name" value="SARAH_dom"/>
</dbReference>
<dbReference type="InterPro" id="IPR049787">
    <property type="entry name" value="SARAH_RASSF6"/>
</dbReference>
<dbReference type="InterPro" id="IPR029071">
    <property type="entry name" value="Ubiquitin-like_domsf"/>
</dbReference>
<dbReference type="PANTHER" id="PTHR22738:SF3">
    <property type="entry name" value="RAS ASSOCIATION DOMAIN-CONTAINING PROTEIN 6"/>
    <property type="match status" value="1"/>
</dbReference>
<dbReference type="PANTHER" id="PTHR22738">
    <property type="entry name" value="RASSF"/>
    <property type="match status" value="1"/>
</dbReference>
<dbReference type="Pfam" id="PF16517">
    <property type="entry name" value="Nore1-SARAH"/>
    <property type="match status" value="1"/>
</dbReference>
<dbReference type="Pfam" id="PF00788">
    <property type="entry name" value="RA"/>
    <property type="match status" value="1"/>
</dbReference>
<dbReference type="SMART" id="SM00314">
    <property type="entry name" value="RA"/>
    <property type="match status" value="1"/>
</dbReference>
<dbReference type="SUPFAM" id="SSF54236">
    <property type="entry name" value="Ubiquitin-like"/>
    <property type="match status" value="1"/>
</dbReference>
<dbReference type="PROSITE" id="PS50200">
    <property type="entry name" value="RA"/>
    <property type="match status" value="1"/>
</dbReference>
<dbReference type="PROSITE" id="PS50951">
    <property type="entry name" value="SARAH"/>
    <property type="match status" value="1"/>
</dbReference>
<proteinExistence type="evidence at transcript level"/>
<organism>
    <name type="scientific">Rattus norvegicus</name>
    <name type="common">Rat</name>
    <dbReference type="NCBI Taxonomy" id="10116"/>
    <lineage>
        <taxon>Eukaryota</taxon>
        <taxon>Metazoa</taxon>
        <taxon>Chordata</taxon>
        <taxon>Craniata</taxon>
        <taxon>Vertebrata</taxon>
        <taxon>Euteleostomi</taxon>
        <taxon>Mammalia</taxon>
        <taxon>Eutheria</taxon>
        <taxon>Euarchontoglires</taxon>
        <taxon>Glires</taxon>
        <taxon>Rodentia</taxon>
        <taxon>Myomorpha</taxon>
        <taxon>Muroidea</taxon>
        <taxon>Muridae</taxon>
        <taxon>Murinae</taxon>
        <taxon>Rattus</taxon>
    </lineage>
</organism>
<name>RASF6_RAT</name>
<reference key="1">
    <citation type="journal article" date="2004" name="Genome Res.">
        <title>The status, quality, and expansion of the NIH full-length cDNA project: the Mammalian Gene Collection (MGC).</title>
        <authorList>
            <consortium name="The MGC Project Team"/>
        </authorList>
    </citation>
    <scope>NUCLEOTIDE SEQUENCE [LARGE SCALE MRNA]</scope>
    <source>
        <tissue>Placenta</tissue>
    </source>
</reference>
<gene>
    <name type="primary">Rassf6</name>
</gene>
<sequence length="341" mass="39794">MTTMDHRFPSRIFVNERTSITREQLNSLLETYNVFYENQKNLHILYGQTEDGQLIVEGMLDIFWGVKRPIQLKIQDEKQISSFDLLKSPETFSSKGRMTRWGEFDDLYRISEMDKTQALAPEARHTPEDYLSCYSVLKQCADEEPESPLLYRTVSEAALVRKRMRAPEMYRKDRMGTLAKHRASINGHVYDHETSIFTPTFGSETKVRANSIMKTEEVIKQLLQKFKIENSPRDFALYIIFGTGEKRKLKKTDVPLLQRLIQGPSKSNARIFLMDKDAEEISSDVAPYINFHFSFLKSILQRLDEEEKMEIERIMAKFNTERAFILKCLQSKRAAKTETTV</sequence>
<protein>
    <recommendedName>
        <fullName>Ras association domain-containing protein 6</fullName>
    </recommendedName>
</protein>
<evidence type="ECO:0000250" key="1"/>
<evidence type="ECO:0000250" key="2">
    <source>
        <dbReference type="UniProtKB" id="Q80UQ2"/>
    </source>
</evidence>
<evidence type="ECO:0000255" key="3">
    <source>
        <dbReference type="PROSITE-ProRule" id="PRU00166"/>
    </source>
</evidence>
<evidence type="ECO:0000255" key="4">
    <source>
        <dbReference type="PROSITE-ProRule" id="PRU00310"/>
    </source>
</evidence>
<comment type="function">
    <text>Involved in the induction of apoptosis. May act as a Ras effector protein. May suppress the serum-induced basal levels of NF-kappa-B.</text>
</comment>
<comment type="subunit">
    <text evidence="1">Interacts with MOAP1. Interaction with activated KRAS is still a matter of debate.</text>
</comment>
<feature type="chain" id="PRO_0000240406" description="Ras association domain-containing protein 6">
    <location>
        <begin position="1"/>
        <end position="341"/>
    </location>
</feature>
<feature type="domain" description="Ras-associating" evidence="3">
    <location>
        <begin position="190"/>
        <end position="278"/>
    </location>
</feature>
<feature type="domain" description="SARAH" evidence="4">
    <location>
        <begin position="285"/>
        <end position="332"/>
    </location>
</feature>
<feature type="modified residue" description="Phosphoserine" evidence="2">
    <location>
        <position position="155"/>
    </location>
</feature>
<accession>Q4QR82</accession>
<keyword id="KW-0053">Apoptosis</keyword>
<keyword id="KW-0597">Phosphoprotein</keyword>
<keyword id="KW-1185">Reference proteome</keyword>